<evidence type="ECO:0000250" key="1"/>
<evidence type="ECO:0000250" key="2">
    <source>
        <dbReference type="UniProtKB" id="P08581"/>
    </source>
</evidence>
<evidence type="ECO:0000250" key="3">
    <source>
        <dbReference type="UniProtKB" id="P16056"/>
    </source>
</evidence>
<evidence type="ECO:0000255" key="4"/>
<evidence type="ECO:0000255" key="5">
    <source>
        <dbReference type="PROSITE-ProRule" id="PRU00159"/>
    </source>
</evidence>
<evidence type="ECO:0000255" key="6">
    <source>
        <dbReference type="PROSITE-ProRule" id="PRU00352"/>
    </source>
</evidence>
<evidence type="ECO:0000255" key="7">
    <source>
        <dbReference type="PROSITE-ProRule" id="PRU10028"/>
    </source>
</evidence>
<evidence type="ECO:0000269" key="8">
    <source>
    </source>
</evidence>
<evidence type="ECO:0000305" key="9"/>
<feature type="signal peptide" evidence="4">
    <location>
        <begin position="1"/>
        <end position="24"/>
    </location>
</feature>
<feature type="chain" id="PRO_0000274195" description="Hepatocyte growth factor receptor">
    <location>
        <begin position="25"/>
        <end position="1384"/>
    </location>
</feature>
<feature type="topological domain" description="Extracellular" evidence="4">
    <location>
        <begin position="25"/>
        <end position="933"/>
    </location>
</feature>
<feature type="transmembrane region" description="Helical" evidence="4">
    <location>
        <begin position="934"/>
        <end position="956"/>
    </location>
</feature>
<feature type="topological domain" description="Cytoplasmic" evidence="4">
    <location>
        <begin position="957"/>
        <end position="1384"/>
    </location>
</feature>
<feature type="domain" description="Sema" evidence="6">
    <location>
        <begin position="27"/>
        <end position="516"/>
    </location>
</feature>
<feature type="domain" description="IPT/TIG 1">
    <location>
        <begin position="564"/>
        <end position="656"/>
    </location>
</feature>
<feature type="domain" description="IPT/TIG 2">
    <location>
        <begin position="658"/>
        <end position="740"/>
    </location>
</feature>
<feature type="domain" description="IPT/TIG 3">
    <location>
        <begin position="743"/>
        <end position="837"/>
    </location>
</feature>
<feature type="domain" description="Protein kinase" evidence="5">
    <location>
        <begin position="1079"/>
        <end position="1346"/>
    </location>
</feature>
<feature type="region of interest" description="Interaction with RANBP9" evidence="1">
    <location>
        <begin position="1213"/>
        <end position="1382"/>
    </location>
</feature>
<feature type="region of interest" description="Interaction with MUC20" evidence="1">
    <location>
        <begin position="1321"/>
        <end position="1360"/>
    </location>
</feature>
<feature type="active site" description="Proton acceptor" evidence="5 7">
    <location>
        <position position="1205"/>
    </location>
</feature>
<feature type="binding site" evidence="5">
    <location>
        <begin position="1085"/>
        <end position="1093"/>
    </location>
    <ligand>
        <name>ATP</name>
        <dbReference type="ChEBI" id="CHEBI:30616"/>
    </ligand>
</feature>
<feature type="binding site" evidence="5">
    <location>
        <position position="1111"/>
    </location>
    <ligand>
        <name>ATP</name>
        <dbReference type="ChEBI" id="CHEBI:30616"/>
    </ligand>
</feature>
<feature type="site" description="Cleavage" evidence="4">
    <location>
        <begin position="308"/>
        <end position="309"/>
    </location>
</feature>
<feature type="modified residue" description="Phosphoserine" evidence="2">
    <location>
        <position position="967"/>
    </location>
</feature>
<feature type="modified residue" description="Phosphothreonine" evidence="2">
    <location>
        <position position="978"/>
    </location>
</feature>
<feature type="modified residue" description="Phosphoserine" evidence="2">
    <location>
        <position position="991"/>
    </location>
</feature>
<feature type="modified residue" description="Phosphoserine" evidence="2">
    <location>
        <position position="998"/>
    </location>
</feature>
<feature type="modified residue" description="Phosphoserine" evidence="2">
    <location>
        <position position="1001"/>
    </location>
</feature>
<feature type="modified residue" description="Phosphotyrosine" evidence="2">
    <location>
        <position position="1004"/>
    </location>
</feature>
<feature type="modified residue" description="Phosphotyrosine" evidence="2">
    <location>
        <position position="1231"/>
    </location>
</feature>
<feature type="modified residue" description="Phosphotyrosine; by autocatalysis" evidence="2">
    <location>
        <position position="1235"/>
    </location>
</feature>
<feature type="modified residue" description="Phosphotyrosine; by autocatalysis" evidence="2">
    <location>
        <position position="1236"/>
    </location>
</feature>
<feature type="modified residue" description="Phosphothreonine" evidence="2">
    <location>
        <position position="1290"/>
    </location>
</feature>
<feature type="modified residue" description="Phosphotyrosine; by autocatalysis" evidence="2">
    <location>
        <position position="1350"/>
    </location>
</feature>
<feature type="modified residue" description="Phosphotyrosine; by autocatalysis" evidence="2">
    <location>
        <position position="1357"/>
    </location>
</feature>
<feature type="modified residue" description="Phosphotyrosine" evidence="2">
    <location>
        <position position="1366"/>
    </location>
</feature>
<feature type="glycosylation site" description="N-linked (GlcNAc...) asparagine" evidence="4">
    <location>
        <position position="45"/>
    </location>
</feature>
<feature type="glycosylation site" description="N-linked (GlcNAc...) asparagine" evidence="4">
    <location>
        <position position="106"/>
    </location>
</feature>
<feature type="glycosylation site" description="N-linked (GlcNAc...) asparagine" evidence="4">
    <location>
        <position position="149"/>
    </location>
</feature>
<feature type="glycosylation site" description="N-linked (GlcNAc...) asparagine" evidence="4">
    <location>
        <position position="203"/>
    </location>
</feature>
<feature type="glycosylation site" description="N-linked (GlcNAc...) asparagine" evidence="4">
    <location>
        <position position="359"/>
    </location>
</feature>
<feature type="glycosylation site" description="N-linked (GlcNAc...) asparagine" evidence="4">
    <location>
        <position position="400"/>
    </location>
</feature>
<feature type="glycosylation site" description="N-linked (GlcNAc...) asparagine" evidence="4">
    <location>
        <position position="406"/>
    </location>
</feature>
<feature type="glycosylation site" description="O-linked (Man) threonine" evidence="2">
    <location>
        <position position="583"/>
    </location>
</feature>
<feature type="glycosylation site" description="N-linked (GlcNAc...) asparagine" evidence="4">
    <location>
        <position position="608"/>
    </location>
</feature>
<feature type="glycosylation site" description="N-linked (GlcNAc...) asparagine" evidence="4">
    <location>
        <position position="636"/>
    </location>
</feature>
<feature type="glycosylation site" description="O-linked (Man) threonine" evidence="2">
    <location>
        <position position="677"/>
    </location>
</feature>
<feature type="glycosylation site" description="O-linked (Man) threonine" evidence="2">
    <location>
        <position position="762"/>
    </location>
</feature>
<feature type="glycosylation site" description="N-linked (GlcNAc...) asparagine" evidence="4">
    <location>
        <position position="786"/>
    </location>
</feature>
<feature type="glycosylation site" description="N-linked (GlcNAc...) asparagine" evidence="4">
    <location>
        <position position="880"/>
    </location>
</feature>
<feature type="glycosylation site" description="N-linked (GlcNAc...) asparagine" evidence="4">
    <location>
        <position position="931"/>
    </location>
</feature>
<feature type="disulfide bond" evidence="6">
    <location>
        <begin position="95"/>
        <end position="101"/>
    </location>
</feature>
<feature type="disulfide bond" evidence="6">
    <location>
        <begin position="98"/>
        <end position="160"/>
    </location>
</feature>
<feature type="disulfide bond" evidence="6">
    <location>
        <begin position="133"/>
        <end position="141"/>
    </location>
</feature>
<feature type="disulfide bond" evidence="6">
    <location>
        <begin position="173"/>
        <end position="176"/>
    </location>
</feature>
<feature type="disulfide bond" evidence="6">
    <location>
        <begin position="299"/>
        <end position="364"/>
    </location>
</feature>
<feature type="disulfide bond" evidence="6">
    <location>
        <begin position="386"/>
        <end position="398"/>
    </location>
</feature>
<feature type="disulfide bond" evidence="6">
    <location>
        <begin position="521"/>
        <end position="539"/>
    </location>
</feature>
<feature type="disulfide bond" evidence="6">
    <location>
        <begin position="527"/>
        <end position="562"/>
    </location>
</feature>
<feature type="disulfide bond" evidence="6">
    <location>
        <begin position="530"/>
        <end position="546"/>
    </location>
</feature>
<feature type="disulfide bond" evidence="6">
    <location>
        <begin position="542"/>
        <end position="552"/>
    </location>
</feature>
<feature type="sequence conflict" description="In Ref. 2; AAR16257." evidence="9" ref="2">
    <original>I</original>
    <variation>V</variation>
    <location>
        <position position="1052"/>
    </location>
</feature>
<organism>
    <name type="scientific">Bos taurus</name>
    <name type="common">Bovine</name>
    <dbReference type="NCBI Taxonomy" id="9913"/>
    <lineage>
        <taxon>Eukaryota</taxon>
        <taxon>Metazoa</taxon>
        <taxon>Chordata</taxon>
        <taxon>Craniata</taxon>
        <taxon>Vertebrata</taxon>
        <taxon>Euteleostomi</taxon>
        <taxon>Mammalia</taxon>
        <taxon>Eutheria</taxon>
        <taxon>Laurasiatheria</taxon>
        <taxon>Artiodactyla</taxon>
        <taxon>Ruminantia</taxon>
        <taxon>Pecora</taxon>
        <taxon>Bovidae</taxon>
        <taxon>Bovinae</taxon>
        <taxon>Bos</taxon>
    </lineage>
</organism>
<sequence>MKAPAVLAPGILVLLFTFVQKSNGECKEALVKSRMNVNMQYQLPNFTAETSIQNVVLHKHHIYLGAINYIYVLNDKDLQKVAEYKTGPVLEHPDCFPCQDCSHKANLSGGVWKDNINMALLVDTYYDDQLISCGSVHRGTCQRHVLPPNNTADIESEVHCMYSPQADEETNQCPDCVVSALGTKVLLSEKDRFINFFVGNTINSSYLPDYILHSISVRRLKETQDGFKFLTDQSYIDVLPELRDSYPIKYVHAFESNHFIYFLTVQRETLDAQTFHTRIIRFCSADSGLHSYMEMPLECILTEKRRKRSTKQEVFNILQAAYVSKPGAQLARQIGASLNDDILYGVFAQSKPDSSEPMNRSAVCAFPVKYVNEFFNKIVNKNNVRCLQHFYGPNHEHCFNRTLLRNSSGCEVRNDEYRTEFTTALPRVDLFTGQFNQVLLTSISTFIKGDLTIANLGTSEGRFMQVVVSRSGSLTPHVNFHLDSHPVSPEVIVEHPLNQNGYTLVVTGKKITKIPLNGLGCEHFQSCSQCLSAPSFVQCGWCHDKCVRLEECSSGTWTQETCLPTIYKVFPTSAPLEGGTTLTVCGWDFGFKRNNKFDLKKTRVLLGNESCTLTLTESTTNMLKCTVGPAMNEHFNMSIVISNSRGSVEYSAFSYVDPIITSISPNYGPKTGGTLLTLTGKHLNSGNSRHISIGGKTCTLKSVSHSILECYTPAQSAPTEFSVKLKIDLANREVNSFIYREDPIVYEIHPTKSFISGGSTITGVGKNLNSVSVLRMVINVHEAGRNFTVACQHRSNSEIICCTTPSIEQLNLQLPLKTKAFFMLDGIHSKYFDLIYVHNPVFKPFEKPVMISVGNENVLEIKGNDIDPEAVKGEVLKVGNKSCENIHSHSEAVLCTVPSDLLKLNSELNIEWKQAISSTVLGKVIVQPDQNFTGLIVGVVSISIILLLLLGLFLWLKKRKQIKDLGSELVRYDARVHTPHLDRLVSARSVSPTTEMVSNESVDYRATFPEDQFPNASQNGSCRQVQYPLTDLSPILTSGDSDISSPLLQNTIHIDLSALNPELVQAVQHVVIGPSSLIVHFNEVIGRGHFGCVYHGTLLDNDDKKIHCAVKSLNRITDIGEVSQFLTEGIIMKDFSHPNVLSLLGICLRSEGSPLVVLPYMKHGDLRNFIRNETHNPTVKDLIGFGLQVAKGMEYLASKKFVHRDLAARNCMLDEKFTVKVADFGLARDVYDKEYYSVHNKTGAKLPVKWMALESLQTQKFTTKSDVWSFGVLLWELMTRGAPPYPDVNTFDITVYLLQGRRLLQPEYCPDPLYEVMLKCWHPKAELRPSFSELVSRISVIFSTFIGEHYVHVNATYVNVKCVAPYPSLLSSQDNVSGEDDDDT</sequence>
<name>MET_BOVIN</name>
<gene>
    <name type="primary">MET</name>
</gene>
<protein>
    <recommendedName>
        <fullName>Hepatocyte growth factor receptor</fullName>
        <shortName>HGF receptor</shortName>
        <ecNumber>2.7.10.1</ecNumber>
    </recommendedName>
    <alternativeName>
        <fullName>HGF/SF receptor</fullName>
    </alternativeName>
    <alternativeName>
        <fullName>Proto-oncogene c-Met</fullName>
    </alternativeName>
    <alternativeName>
        <fullName>Scatter factor receptor</fullName>
        <shortName>SF receptor</shortName>
    </alternativeName>
    <alternativeName>
        <fullName>Tyrosine-protein kinase Met</fullName>
    </alternativeName>
</protein>
<comment type="function">
    <text evidence="1">Receptor tyrosine kinase that transduces signals from the extracellular matrix into the cytoplasm by binding to hepatocyte growth factor/HGF ligand. Regulates many physiological processes including proliferation, scattering, morphogenesis and survival. Ligand binding at the cell surface induces autophosphorylation of MET on its intracellular domain that provides docking sites for downstream signaling molecules. Following activation by ligand, interacts with the PI3-kinase subunit PIK3R1, PLCG1, SRC, GRB2, STAT3 or the adapter GAB1. Recruitment of these downstream effectors by MET leads to the activation of several signaling cascades including the RAS-ERK, PI3 kinase-AKT, or PLCgamma-PKC. The RAS-ERK activation is associated with the morphogenetic effects while PI3K/AKT coordinates prosurvival effects. During embryonic development, MET signaling plays a role in gastrulation, development and migration of muscles and neuronal precursors, angiogenesis and kidney formation. In adults, participates in wound healing as well as organ regeneration and tissue remodeling. Also promotes differentiation and proliferation of hematopoietic cells (By similarity).</text>
</comment>
<comment type="catalytic activity">
    <reaction evidence="7">
        <text>L-tyrosyl-[protein] + ATP = O-phospho-L-tyrosyl-[protein] + ADP + H(+)</text>
        <dbReference type="Rhea" id="RHEA:10596"/>
        <dbReference type="Rhea" id="RHEA-COMP:10136"/>
        <dbReference type="Rhea" id="RHEA-COMP:20101"/>
        <dbReference type="ChEBI" id="CHEBI:15378"/>
        <dbReference type="ChEBI" id="CHEBI:30616"/>
        <dbReference type="ChEBI" id="CHEBI:46858"/>
        <dbReference type="ChEBI" id="CHEBI:61978"/>
        <dbReference type="ChEBI" id="CHEBI:456216"/>
        <dbReference type="EC" id="2.7.10.1"/>
    </reaction>
</comment>
<comment type="activity regulation">
    <text evidence="1">In its inactive state, the C-terminal tail interacts with the catalytic domain and inhibits the kinase activity. Upon ligand binding, the C-terminal tail is displaced and becomes phosphorylated, thus increasing the kinase activity (By similarity).</text>
</comment>
<comment type="subunit">
    <text evidence="2 3">Heterodimer made of an alpha chain (50 kDa) and a beta chain (145 kDa) which are disulfide linked. Binds PLXNB1. Interacts when phosphorylated with downstream effectors including STAT3, PIK3R1, SRC, PCLG1, GRB2 and GAB1. Interacts with SPSB1, SPSB2 and SPSB4. Interacts with INPP5D/SHIP1. When phosphorylated at Tyr-1357, interacts with INPPL1/SHIP2. Interacts with RANBP9 and RANBP10, as well as SPSB1, SPSB2, SPSB3 and SPSB4. SPSB1 binding occurs in the presence and in the absence of HGF, however HGF treatment has a positive effect on this interaction. Interacts with MUC20; prevents interaction with GRB2 and suppresses hepatocyte growth factor-induced cell proliferation. Interacts with GRB10. Interacts with PTPN1 and PTPN2. Interacts with HSP90AA1 and HSP90AB1; the interaction suppresses MET kinase activity. Interacts with tensin TNS3 (By similarity). Interacts (when phosphorylated) with tensin TNS4 (via SH2 domain); the interaction increases MET protein stability by inhibiting MET endocytosis and subsequent lysosomal degradation (By similarity).</text>
</comment>
<comment type="subcellular location">
    <subcellularLocation>
        <location evidence="8">Membrane</location>
        <topology evidence="8">Single-pass type I membrane protein</topology>
    </subcellularLocation>
</comment>
<comment type="tissue specificity">
    <text evidence="8">Expressed in many tissues, including liver, lung, heart, spleen and mammary gland.</text>
</comment>
<comment type="developmental stage">
    <text evidence="8">In the mammary gland, at the mRNA level, expressed in the inactive and involuting stages, but not in the developing, nor lactating stages. However, at the protein level, detected on epithelial cells in the inactive, developing and involuting stages, but not in the lactating stage, and at all stages on myoepithelial cells, while it is not found on adipocytes and fibroblasts.</text>
</comment>
<comment type="domain">
    <text evidence="1">The kinase domain is involved in SPSB1 binding.</text>
</comment>
<comment type="domain">
    <text evidence="1">The beta-propeller Sema domain mediates binding to HGF.</text>
</comment>
<comment type="PTM">
    <text evidence="2">Autophosphorylated in response to ligand binding on Tyr-1235 and Tyr-1236 in the kinase domain leading to further phosphorylation of Tyr-1350 and Tyr-1357 in the C-terminal multifunctional docking site. Dephosphorylated by PTPRJ at Tyr-1350 and Tyr-1366. Dephosphorylated by PTPN1 and PTPN2 (By similarity).</text>
</comment>
<comment type="PTM">
    <text evidence="2">Ubiquitinated. Ubiquitination by CBL regulates the receptor stability and activity through proteasomal degradation (By similarity).</text>
</comment>
<comment type="PTM">
    <text evidence="2">O-mannosylation of IPT/TIG domains by TMEM260 is required for protein maturation. O-mannosylated residues are composed of single mannose glycans that are not elongated or modified.</text>
</comment>
<comment type="similarity">
    <text evidence="5">Belongs to the protein kinase superfamily. Tyr protein kinase family.</text>
</comment>
<accession>Q769I5</accession>
<accession>A4D7R6</accession>
<dbReference type="EC" id="2.7.10.1"/>
<dbReference type="EMBL" id="AB112434">
    <property type="protein sequence ID" value="BAD05055.1"/>
    <property type="molecule type" value="mRNA"/>
</dbReference>
<dbReference type="EMBL" id="DP000008">
    <property type="protein sequence ID" value="AAR16257.1"/>
    <property type="molecule type" value="Genomic_DNA"/>
</dbReference>
<dbReference type="RefSeq" id="NP_001013017.2">
    <property type="nucleotide sequence ID" value="NM_001012999.2"/>
</dbReference>
<dbReference type="SMR" id="Q769I5"/>
<dbReference type="FunCoup" id="Q769I5">
    <property type="interactions" value="627"/>
</dbReference>
<dbReference type="STRING" id="9913.ENSBTAP00000008102"/>
<dbReference type="GlyCosmos" id="Q769I5">
    <property type="glycosylation" value="12 sites, No reported glycans"/>
</dbReference>
<dbReference type="GlyGen" id="Q769I5">
    <property type="glycosylation" value="15 sites"/>
</dbReference>
<dbReference type="PaxDb" id="9913-ENSBTAP00000008102"/>
<dbReference type="GeneID" id="280855"/>
<dbReference type="KEGG" id="bta:280855"/>
<dbReference type="CTD" id="4233"/>
<dbReference type="eggNOG" id="KOG1095">
    <property type="taxonomic scope" value="Eukaryota"/>
</dbReference>
<dbReference type="eggNOG" id="KOG3610">
    <property type="taxonomic scope" value="Eukaryota"/>
</dbReference>
<dbReference type="InParanoid" id="Q769I5"/>
<dbReference type="OrthoDB" id="9985181at2759"/>
<dbReference type="TreeFam" id="TF317402"/>
<dbReference type="Proteomes" id="UP000009136">
    <property type="component" value="Unplaced"/>
</dbReference>
<dbReference type="GO" id="GO:0009925">
    <property type="term" value="C:basal plasma membrane"/>
    <property type="evidence" value="ECO:0000318"/>
    <property type="project" value="GO_Central"/>
</dbReference>
<dbReference type="GO" id="GO:0005886">
    <property type="term" value="C:plasma membrane"/>
    <property type="evidence" value="ECO:0000318"/>
    <property type="project" value="GO_Central"/>
</dbReference>
<dbReference type="GO" id="GO:0043235">
    <property type="term" value="C:receptor complex"/>
    <property type="evidence" value="ECO:0000318"/>
    <property type="project" value="GO_Central"/>
</dbReference>
<dbReference type="GO" id="GO:0005524">
    <property type="term" value="F:ATP binding"/>
    <property type="evidence" value="ECO:0007669"/>
    <property type="project" value="UniProtKB-KW"/>
</dbReference>
<dbReference type="GO" id="GO:0005008">
    <property type="term" value="F:hepatocyte growth factor receptor activity"/>
    <property type="evidence" value="ECO:0000318"/>
    <property type="project" value="GO_Central"/>
</dbReference>
<dbReference type="GO" id="GO:0017154">
    <property type="term" value="F:semaphorin receptor activity"/>
    <property type="evidence" value="ECO:0007669"/>
    <property type="project" value="InterPro"/>
</dbReference>
<dbReference type="GO" id="GO:0007169">
    <property type="term" value="P:cell surface receptor protein tyrosine kinase signaling pathway"/>
    <property type="evidence" value="ECO:0000318"/>
    <property type="project" value="GO_Central"/>
</dbReference>
<dbReference type="GO" id="GO:0001889">
    <property type="term" value="P:liver development"/>
    <property type="evidence" value="ECO:0000318"/>
    <property type="project" value="GO_Central"/>
</dbReference>
<dbReference type="GO" id="GO:0030182">
    <property type="term" value="P:neuron differentiation"/>
    <property type="evidence" value="ECO:0000318"/>
    <property type="project" value="GO_Central"/>
</dbReference>
<dbReference type="GO" id="GO:0031016">
    <property type="term" value="P:pancreas development"/>
    <property type="evidence" value="ECO:0000318"/>
    <property type="project" value="GO_Central"/>
</dbReference>
<dbReference type="GO" id="GO:0050918">
    <property type="term" value="P:positive chemotaxis"/>
    <property type="evidence" value="ECO:0000250"/>
    <property type="project" value="UniProtKB"/>
</dbReference>
<dbReference type="GO" id="GO:2001028">
    <property type="term" value="P:positive regulation of endothelial cell chemotaxis"/>
    <property type="evidence" value="ECO:0000250"/>
    <property type="project" value="UniProtKB"/>
</dbReference>
<dbReference type="GO" id="GO:0071526">
    <property type="term" value="P:semaphorin-plexin signaling pathway"/>
    <property type="evidence" value="ECO:0000250"/>
    <property type="project" value="UniProtKB"/>
</dbReference>
<dbReference type="CDD" id="cd00603">
    <property type="entry name" value="IPT_PCSR"/>
    <property type="match status" value="1"/>
</dbReference>
<dbReference type="CDD" id="cd01180">
    <property type="entry name" value="IPT_plexin_repeat1"/>
    <property type="match status" value="1"/>
</dbReference>
<dbReference type="CDD" id="cd01181">
    <property type="entry name" value="IPT_plexin_repeat3"/>
    <property type="match status" value="1"/>
</dbReference>
<dbReference type="CDD" id="cd05058">
    <property type="entry name" value="PTKc_Met_Ron"/>
    <property type="match status" value="1"/>
</dbReference>
<dbReference type="FunFam" id="1.10.510.10:FF:000093">
    <property type="entry name" value="Hepatocyte growth factor receptor"/>
    <property type="match status" value="1"/>
</dbReference>
<dbReference type="FunFam" id="2.130.10.10:FF:000088">
    <property type="entry name" value="Hepatocyte growth factor receptor"/>
    <property type="match status" value="1"/>
</dbReference>
<dbReference type="FunFam" id="2.60.40.10:FF:000213">
    <property type="entry name" value="Hepatocyte growth factor receptor"/>
    <property type="match status" value="1"/>
</dbReference>
<dbReference type="FunFam" id="2.60.40.10:FF:000400">
    <property type="entry name" value="Hepatocyte growth factor receptor"/>
    <property type="match status" value="1"/>
</dbReference>
<dbReference type="FunFam" id="2.60.40.10:FF:002708">
    <property type="entry name" value="Hepatocyte growth factor receptor"/>
    <property type="match status" value="1"/>
</dbReference>
<dbReference type="FunFam" id="3.30.200.20:FF:000188">
    <property type="entry name" value="Hepatocyte growth factor receptor"/>
    <property type="match status" value="1"/>
</dbReference>
<dbReference type="FunFam" id="3.30.1680.10:FF:000006">
    <property type="entry name" value="Macrophage-stimulating 1 receptor b"/>
    <property type="match status" value="1"/>
</dbReference>
<dbReference type="Gene3D" id="2.60.40.10">
    <property type="entry name" value="Immunoglobulins"/>
    <property type="match status" value="2"/>
</dbReference>
<dbReference type="Gene3D" id="3.30.200.20">
    <property type="entry name" value="Phosphorylase Kinase, domain 1"/>
    <property type="match status" value="1"/>
</dbReference>
<dbReference type="Gene3D" id="1.10.510.10">
    <property type="entry name" value="Transferase(Phosphotransferase) domain 1"/>
    <property type="match status" value="1"/>
</dbReference>
<dbReference type="Gene3D" id="2.130.10.10">
    <property type="entry name" value="YVTN repeat-like/Quinoprotein amine dehydrogenase"/>
    <property type="match status" value="1"/>
</dbReference>
<dbReference type="InterPro" id="IPR013783">
    <property type="entry name" value="Ig-like_fold"/>
</dbReference>
<dbReference type="InterPro" id="IPR014756">
    <property type="entry name" value="Ig_E-set"/>
</dbReference>
<dbReference type="InterPro" id="IPR002909">
    <property type="entry name" value="IPT_dom"/>
</dbReference>
<dbReference type="InterPro" id="IPR011009">
    <property type="entry name" value="Kinase-like_dom_sf"/>
</dbReference>
<dbReference type="InterPro" id="IPR031148">
    <property type="entry name" value="Plexin"/>
</dbReference>
<dbReference type="InterPro" id="IPR002165">
    <property type="entry name" value="Plexin_repeat"/>
</dbReference>
<dbReference type="InterPro" id="IPR000719">
    <property type="entry name" value="Prot_kinase_dom"/>
</dbReference>
<dbReference type="InterPro" id="IPR017441">
    <property type="entry name" value="Protein_kinase_ATP_BS"/>
</dbReference>
<dbReference type="InterPro" id="IPR016201">
    <property type="entry name" value="PSI"/>
</dbReference>
<dbReference type="InterPro" id="IPR001627">
    <property type="entry name" value="Semap_dom"/>
</dbReference>
<dbReference type="InterPro" id="IPR036352">
    <property type="entry name" value="Semap_dom_sf"/>
</dbReference>
<dbReference type="InterPro" id="IPR001245">
    <property type="entry name" value="Ser-Thr/Tyr_kinase_cat_dom"/>
</dbReference>
<dbReference type="InterPro" id="IPR008266">
    <property type="entry name" value="Tyr_kinase_AS"/>
</dbReference>
<dbReference type="InterPro" id="IPR020635">
    <property type="entry name" value="Tyr_kinase_cat_dom"/>
</dbReference>
<dbReference type="InterPro" id="IPR016244">
    <property type="entry name" value="Tyr_kinase_HGF/MSP_rcpt"/>
</dbReference>
<dbReference type="InterPro" id="IPR015943">
    <property type="entry name" value="WD40/YVTN_repeat-like_dom_sf"/>
</dbReference>
<dbReference type="PANTHER" id="PTHR22625:SF61">
    <property type="entry name" value="HEPATOCYTE GROWTH FACTOR RECEPTOR"/>
    <property type="match status" value="1"/>
</dbReference>
<dbReference type="PANTHER" id="PTHR22625">
    <property type="entry name" value="PLEXIN"/>
    <property type="match status" value="1"/>
</dbReference>
<dbReference type="Pfam" id="PF07714">
    <property type="entry name" value="PK_Tyr_Ser-Thr"/>
    <property type="match status" value="1"/>
</dbReference>
<dbReference type="Pfam" id="PF01437">
    <property type="entry name" value="PSI"/>
    <property type="match status" value="1"/>
</dbReference>
<dbReference type="Pfam" id="PF01403">
    <property type="entry name" value="Sema"/>
    <property type="match status" value="1"/>
</dbReference>
<dbReference type="Pfam" id="PF01833">
    <property type="entry name" value="TIG"/>
    <property type="match status" value="3"/>
</dbReference>
<dbReference type="PIRSF" id="PIRSF000617">
    <property type="entry name" value="TyrPK_HGF-R"/>
    <property type="match status" value="1"/>
</dbReference>
<dbReference type="PRINTS" id="PR00109">
    <property type="entry name" value="TYRKINASE"/>
</dbReference>
<dbReference type="SMART" id="SM00429">
    <property type="entry name" value="IPT"/>
    <property type="match status" value="4"/>
</dbReference>
<dbReference type="SMART" id="SM00423">
    <property type="entry name" value="PSI"/>
    <property type="match status" value="1"/>
</dbReference>
<dbReference type="SMART" id="SM00630">
    <property type="entry name" value="Sema"/>
    <property type="match status" value="1"/>
</dbReference>
<dbReference type="SMART" id="SM00219">
    <property type="entry name" value="TyrKc"/>
    <property type="match status" value="1"/>
</dbReference>
<dbReference type="SUPFAM" id="SSF81296">
    <property type="entry name" value="E set domains"/>
    <property type="match status" value="3"/>
</dbReference>
<dbReference type="SUPFAM" id="SSF103575">
    <property type="entry name" value="Plexin repeat"/>
    <property type="match status" value="1"/>
</dbReference>
<dbReference type="SUPFAM" id="SSF56112">
    <property type="entry name" value="Protein kinase-like (PK-like)"/>
    <property type="match status" value="1"/>
</dbReference>
<dbReference type="SUPFAM" id="SSF101912">
    <property type="entry name" value="Sema domain"/>
    <property type="match status" value="1"/>
</dbReference>
<dbReference type="PROSITE" id="PS00107">
    <property type="entry name" value="PROTEIN_KINASE_ATP"/>
    <property type="match status" value="1"/>
</dbReference>
<dbReference type="PROSITE" id="PS50011">
    <property type="entry name" value="PROTEIN_KINASE_DOM"/>
    <property type="match status" value="1"/>
</dbReference>
<dbReference type="PROSITE" id="PS00109">
    <property type="entry name" value="PROTEIN_KINASE_TYR"/>
    <property type="match status" value="1"/>
</dbReference>
<dbReference type="PROSITE" id="PS51004">
    <property type="entry name" value="SEMA"/>
    <property type="match status" value="1"/>
</dbReference>
<proteinExistence type="evidence at transcript level"/>
<keyword id="KW-0067">ATP-binding</keyword>
<keyword id="KW-1015">Disulfide bond</keyword>
<keyword id="KW-0325">Glycoprotein</keyword>
<keyword id="KW-0418">Kinase</keyword>
<keyword id="KW-0472">Membrane</keyword>
<keyword id="KW-0547">Nucleotide-binding</keyword>
<keyword id="KW-0597">Phosphoprotein</keyword>
<keyword id="KW-0656">Proto-oncogene</keyword>
<keyword id="KW-0675">Receptor</keyword>
<keyword id="KW-1185">Reference proteome</keyword>
<keyword id="KW-0677">Repeat</keyword>
<keyword id="KW-0732">Signal</keyword>
<keyword id="KW-0808">Transferase</keyword>
<keyword id="KW-0812">Transmembrane</keyword>
<keyword id="KW-1133">Transmembrane helix</keyword>
<keyword id="KW-0829">Tyrosine-protein kinase</keyword>
<keyword id="KW-0832">Ubl conjugation</keyword>
<reference key="1">
    <citation type="journal article" date="2006" name="Domest. Anim. Endocrinol.">
        <title>Bovine hepatocyte growth factor and its receptor c-Met: cDNA cloning and expression analysis in the mammary gland.</title>
        <authorList>
            <person name="Yamaji D."/>
            <person name="Kimura K."/>
            <person name="Watanabe A."/>
            <person name="Kon Y."/>
            <person name="Iwanaga T."/>
            <person name="Soliman M.M."/>
            <person name="Ahmed M.M."/>
            <person name="Saito M."/>
        </authorList>
    </citation>
    <scope>NUCLEOTIDE SEQUENCE [MRNA]</scope>
    <scope>SUBCELLULAR LOCATION</scope>
    <scope>TISSUE SPECIFICITY</scope>
    <scope>DEVELOPMENTAL STAGE</scope>
</reference>
<reference key="2">
    <citation type="journal article" date="2003" name="Nature">
        <title>Comparative analyses of multi-species sequences from targeted genomic regions.</title>
        <authorList>
            <person name="Thomas J.W."/>
            <person name="Touchman J.W."/>
            <person name="Blakesley R.W."/>
            <person name="Bouffard G.G."/>
            <person name="Beckstrom-Sternberg S.M."/>
            <person name="Margulies E.H."/>
            <person name="Blanchette M."/>
            <person name="Siepel A.C."/>
            <person name="Thomas P.J."/>
            <person name="McDowell J.C."/>
            <person name="Maskeri B."/>
            <person name="Hansen N.F."/>
            <person name="Schwartz M.S."/>
            <person name="Weber R.J."/>
            <person name="Kent W.J."/>
            <person name="Karolchik D."/>
            <person name="Bruen T.C."/>
            <person name="Bevan R."/>
            <person name="Cutler D.J."/>
            <person name="Schwartz S."/>
            <person name="Elnitski L."/>
            <person name="Idol J.R."/>
            <person name="Prasad A.B."/>
            <person name="Lee-Lin S.-Q."/>
            <person name="Maduro V.V.B."/>
            <person name="Summers T.J."/>
            <person name="Portnoy M.E."/>
            <person name="Dietrich N.L."/>
            <person name="Akhter N."/>
            <person name="Ayele K."/>
            <person name="Benjamin B."/>
            <person name="Cariaga K."/>
            <person name="Brinkley C.P."/>
            <person name="Brooks S.Y."/>
            <person name="Granite S."/>
            <person name="Guan X."/>
            <person name="Gupta J."/>
            <person name="Haghighi P."/>
            <person name="Ho S.-L."/>
            <person name="Huang M.C."/>
            <person name="Karlins E."/>
            <person name="Laric P.L."/>
            <person name="Legaspi R."/>
            <person name="Lim M.J."/>
            <person name="Maduro Q.L."/>
            <person name="Masiello C.A."/>
            <person name="Mastrian S.D."/>
            <person name="McCloskey J.C."/>
            <person name="Pearson R."/>
            <person name="Stantripop S."/>
            <person name="Tiongson E.E."/>
            <person name="Tran J.T."/>
            <person name="Tsurgeon C."/>
            <person name="Vogt J.L."/>
            <person name="Walker M.A."/>
            <person name="Wetherby K.D."/>
            <person name="Wiggins L.S."/>
            <person name="Young A.C."/>
            <person name="Zhang L.-H."/>
            <person name="Osoegawa K."/>
            <person name="Zhu B."/>
            <person name="Zhao B."/>
            <person name="Shu C.L."/>
            <person name="De Jong P.J."/>
            <person name="Lawrence C.E."/>
            <person name="Smit A.F."/>
            <person name="Chakravarti A."/>
            <person name="Haussler D."/>
            <person name="Green P."/>
            <person name="Miller W."/>
            <person name="Green E.D."/>
        </authorList>
    </citation>
    <scope>NUCLEOTIDE SEQUENCE [LARGE SCALE GENOMIC DNA]</scope>
</reference>